<name>DAPAT_CHLMU</name>
<gene>
    <name evidence="1" type="primary">dapL</name>
    <name type="ordered locus">TC_0669</name>
</gene>
<organism>
    <name type="scientific">Chlamydia muridarum (strain MoPn / Nigg)</name>
    <dbReference type="NCBI Taxonomy" id="243161"/>
    <lineage>
        <taxon>Bacteria</taxon>
        <taxon>Pseudomonadati</taxon>
        <taxon>Chlamydiota</taxon>
        <taxon>Chlamydiia</taxon>
        <taxon>Chlamydiales</taxon>
        <taxon>Chlamydiaceae</taxon>
        <taxon>Chlamydia/Chlamydophila group</taxon>
        <taxon>Chlamydia</taxon>
    </lineage>
</organism>
<sequence>MKRNPNFTSLTQNYLFSDLRNRIAQFHSENPQHQVINLSIGDTTQPLDTSVAEAFSQAIARFSSPSTYCGYGPDFGLPSLRQKLSEKLYHGCVNAEEIFISDGAKVDLFRLLSFFGPNQIVAVQDPSYPAYIDIARLTGAKEIVSLPCLQENDFLPVFPENTHIDILCLCSPNNPTGTALNKNQLRAIVRYAIEHNILILFDAAYSAFISAPSLPKSIFEIPDARFCAIEINSFSKSLGFAGIRLGWTVIPKELTYEDGQPIIRDWKRFLSTTFNGASIPAQEAATAGLSTLSKLEAVHYYKENSHLLKTSLLKAGFQVFGGEHAPYLWVKPTIETVPYRDLFDFFLQEYHIAITPGIGFGLCGSGFVRFSSLGKREDVLVACERLQMTPALQ</sequence>
<dbReference type="EC" id="2.6.1.83" evidence="1"/>
<dbReference type="EMBL" id="AE002160">
    <property type="protein sequence ID" value="AAF73587.1"/>
    <property type="molecule type" value="Genomic_DNA"/>
</dbReference>
<dbReference type="RefSeq" id="WP_010231171.1">
    <property type="nucleotide sequence ID" value="NZ_CP063055.1"/>
</dbReference>
<dbReference type="SMR" id="Q9PK04"/>
<dbReference type="GeneID" id="1246030"/>
<dbReference type="KEGG" id="cmu:TC_0669"/>
<dbReference type="eggNOG" id="COG0436">
    <property type="taxonomic scope" value="Bacteria"/>
</dbReference>
<dbReference type="HOGENOM" id="CLU_051433_0_0_0"/>
<dbReference type="OrthoDB" id="9813612at2"/>
<dbReference type="UniPathway" id="UPA00034">
    <property type="reaction ID" value="UER00466"/>
</dbReference>
<dbReference type="Proteomes" id="UP000000800">
    <property type="component" value="Chromosome"/>
</dbReference>
<dbReference type="GO" id="GO:0010285">
    <property type="term" value="F:L,L-diaminopimelate aminotransferase activity"/>
    <property type="evidence" value="ECO:0007669"/>
    <property type="project" value="UniProtKB-UniRule"/>
</dbReference>
<dbReference type="GO" id="GO:0030170">
    <property type="term" value="F:pyridoxal phosphate binding"/>
    <property type="evidence" value="ECO:0007669"/>
    <property type="project" value="UniProtKB-UniRule"/>
</dbReference>
<dbReference type="GO" id="GO:0033362">
    <property type="term" value="P:lysine biosynthetic process via diaminopimelate, diaminopimelate-aminotransferase pathway"/>
    <property type="evidence" value="ECO:0007669"/>
    <property type="project" value="UniProtKB-UniRule"/>
</dbReference>
<dbReference type="CDD" id="cd00609">
    <property type="entry name" value="AAT_like"/>
    <property type="match status" value="1"/>
</dbReference>
<dbReference type="FunFam" id="3.40.640.10:FF:000099">
    <property type="entry name" value="LL-diaminopimelate aminotransferase, chloroplastic"/>
    <property type="match status" value="1"/>
</dbReference>
<dbReference type="Gene3D" id="3.90.1150.10">
    <property type="entry name" value="Aspartate Aminotransferase, domain 1"/>
    <property type="match status" value="1"/>
</dbReference>
<dbReference type="Gene3D" id="3.40.640.10">
    <property type="entry name" value="Type I PLP-dependent aspartate aminotransferase-like (Major domain)"/>
    <property type="match status" value="1"/>
</dbReference>
<dbReference type="HAMAP" id="MF_01642">
    <property type="entry name" value="DapL_aminotrans_1"/>
    <property type="match status" value="1"/>
</dbReference>
<dbReference type="InterPro" id="IPR004839">
    <property type="entry name" value="Aminotransferase_I/II_large"/>
</dbReference>
<dbReference type="InterPro" id="IPR019942">
    <property type="entry name" value="DapL/ALD1"/>
</dbReference>
<dbReference type="InterPro" id="IPR004838">
    <property type="entry name" value="NHTrfase_class1_PyrdxlP-BS"/>
</dbReference>
<dbReference type="InterPro" id="IPR015424">
    <property type="entry name" value="PyrdxlP-dep_Trfase"/>
</dbReference>
<dbReference type="InterPro" id="IPR015421">
    <property type="entry name" value="PyrdxlP-dep_Trfase_major"/>
</dbReference>
<dbReference type="InterPro" id="IPR015422">
    <property type="entry name" value="PyrdxlP-dep_Trfase_small"/>
</dbReference>
<dbReference type="NCBIfam" id="TIGR03542">
    <property type="entry name" value="DAPAT_plant"/>
    <property type="match status" value="1"/>
</dbReference>
<dbReference type="PANTHER" id="PTHR43144">
    <property type="entry name" value="AMINOTRANSFERASE"/>
    <property type="match status" value="1"/>
</dbReference>
<dbReference type="Pfam" id="PF00155">
    <property type="entry name" value="Aminotran_1_2"/>
    <property type="match status" value="1"/>
</dbReference>
<dbReference type="SUPFAM" id="SSF53383">
    <property type="entry name" value="PLP-dependent transferases"/>
    <property type="match status" value="1"/>
</dbReference>
<dbReference type="PROSITE" id="PS00105">
    <property type="entry name" value="AA_TRANSFER_CLASS_1"/>
    <property type="match status" value="1"/>
</dbReference>
<keyword id="KW-0032">Aminotransferase</keyword>
<keyword id="KW-0663">Pyridoxal phosphate</keyword>
<keyword id="KW-0808">Transferase</keyword>
<evidence type="ECO:0000255" key="1">
    <source>
        <dbReference type="HAMAP-Rule" id="MF_01642"/>
    </source>
</evidence>
<feature type="chain" id="PRO_0000342218" description="LL-diaminopimelate aminotransferase">
    <location>
        <begin position="1"/>
        <end position="393"/>
    </location>
</feature>
<feature type="binding site" evidence="1">
    <location>
        <position position="14"/>
    </location>
    <ligand>
        <name>substrate</name>
    </ligand>
</feature>
<feature type="binding site" evidence="1">
    <location>
        <position position="41"/>
    </location>
    <ligand>
        <name>substrate</name>
    </ligand>
</feature>
<feature type="binding site" evidence="1">
    <location>
        <position position="71"/>
    </location>
    <ligand>
        <name>pyridoxal 5'-phosphate</name>
        <dbReference type="ChEBI" id="CHEBI:597326"/>
    </ligand>
</feature>
<feature type="binding site" evidence="1">
    <location>
        <begin position="104"/>
        <end position="105"/>
    </location>
    <ligand>
        <name>pyridoxal 5'-phosphate</name>
        <dbReference type="ChEBI" id="CHEBI:597326"/>
    </ligand>
</feature>
<feature type="binding site" evidence="1">
    <location>
        <position position="105"/>
    </location>
    <ligand>
        <name>substrate</name>
    </ligand>
</feature>
<feature type="binding site" evidence="1">
    <location>
        <position position="128"/>
    </location>
    <ligand>
        <name>pyridoxal 5'-phosphate</name>
        <dbReference type="ChEBI" id="CHEBI:597326"/>
    </ligand>
</feature>
<feature type="binding site" evidence="1">
    <location>
        <position position="128"/>
    </location>
    <ligand>
        <name>substrate</name>
    </ligand>
</feature>
<feature type="binding site" evidence="1">
    <location>
        <position position="174"/>
    </location>
    <ligand>
        <name>pyridoxal 5'-phosphate</name>
        <dbReference type="ChEBI" id="CHEBI:597326"/>
    </ligand>
</feature>
<feature type="binding site" evidence="1">
    <location>
        <position position="174"/>
    </location>
    <ligand>
        <name>substrate</name>
    </ligand>
</feature>
<feature type="binding site" evidence="1">
    <location>
        <position position="205"/>
    </location>
    <ligand>
        <name>pyridoxal 5'-phosphate</name>
        <dbReference type="ChEBI" id="CHEBI:597326"/>
    </ligand>
</feature>
<feature type="binding site" evidence="1">
    <location>
        <begin position="233"/>
        <end position="235"/>
    </location>
    <ligand>
        <name>pyridoxal 5'-phosphate</name>
        <dbReference type="ChEBI" id="CHEBI:597326"/>
    </ligand>
</feature>
<feature type="binding site" evidence="1">
    <location>
        <position position="244"/>
    </location>
    <ligand>
        <name>pyridoxal 5'-phosphate</name>
        <dbReference type="ChEBI" id="CHEBI:597326"/>
    </ligand>
</feature>
<feature type="binding site" evidence="1">
    <location>
        <position position="275"/>
    </location>
    <ligand>
        <name>pyridoxal 5'-phosphate</name>
        <dbReference type="ChEBI" id="CHEBI:597326"/>
    </ligand>
</feature>
<feature type="binding site" evidence="1">
    <location>
        <position position="275"/>
    </location>
    <ligand>
        <name>substrate</name>
    </ligand>
</feature>
<feature type="binding site" evidence="1">
    <location>
        <position position="369"/>
    </location>
    <ligand>
        <name>substrate</name>
    </ligand>
</feature>
<feature type="modified residue" description="N6-(pyridoxal phosphate)lysine" evidence="1">
    <location>
        <position position="236"/>
    </location>
</feature>
<protein>
    <recommendedName>
        <fullName evidence="1">LL-diaminopimelate aminotransferase</fullName>
        <shortName evidence="1">DAP-AT</shortName>
        <shortName evidence="1">DAP-aminotransferase</shortName>
        <shortName evidence="1">LL-DAP-aminotransferase</shortName>
        <ecNumber evidence="1">2.6.1.83</ecNumber>
    </recommendedName>
</protein>
<accession>Q9PK04</accession>
<comment type="function">
    <text evidence="1">Involved in the synthesis of meso-diaminopimelate (m-DAP or DL-DAP), required for both lysine and peptidoglycan biosynthesis. Catalyzes the direct conversion of tetrahydrodipicolinate to LL-diaminopimelate.</text>
</comment>
<comment type="catalytic activity">
    <reaction evidence="1">
        <text>(2S,6S)-2,6-diaminopimelate + 2-oxoglutarate = (S)-2,3,4,5-tetrahydrodipicolinate + L-glutamate + H2O + H(+)</text>
        <dbReference type="Rhea" id="RHEA:23988"/>
        <dbReference type="ChEBI" id="CHEBI:15377"/>
        <dbReference type="ChEBI" id="CHEBI:15378"/>
        <dbReference type="ChEBI" id="CHEBI:16810"/>
        <dbReference type="ChEBI" id="CHEBI:16845"/>
        <dbReference type="ChEBI" id="CHEBI:29985"/>
        <dbReference type="ChEBI" id="CHEBI:57609"/>
        <dbReference type="EC" id="2.6.1.83"/>
    </reaction>
</comment>
<comment type="cofactor">
    <cofactor evidence="1">
        <name>pyridoxal 5'-phosphate</name>
        <dbReference type="ChEBI" id="CHEBI:597326"/>
    </cofactor>
</comment>
<comment type="pathway">
    <text evidence="1">Amino-acid biosynthesis; L-lysine biosynthesis via DAP pathway; LL-2,6-diaminopimelate from (S)-tetrahydrodipicolinate (aminotransferase route): step 1/1.</text>
</comment>
<comment type="subunit">
    <text evidence="1">Homodimer.</text>
</comment>
<comment type="similarity">
    <text evidence="1">Belongs to the class-I pyridoxal-phosphate-dependent aminotransferase family. LL-diaminopimelate aminotransferase subfamily.</text>
</comment>
<reference key="1">
    <citation type="journal article" date="2000" name="Nucleic Acids Res.">
        <title>Genome sequences of Chlamydia trachomatis MoPn and Chlamydia pneumoniae AR39.</title>
        <authorList>
            <person name="Read T.D."/>
            <person name="Brunham R.C."/>
            <person name="Shen C."/>
            <person name="Gill S.R."/>
            <person name="Heidelberg J.F."/>
            <person name="White O."/>
            <person name="Hickey E.K."/>
            <person name="Peterson J.D."/>
            <person name="Utterback T.R."/>
            <person name="Berry K.J."/>
            <person name="Bass S."/>
            <person name="Linher K.D."/>
            <person name="Weidman J.F."/>
            <person name="Khouri H.M."/>
            <person name="Craven B."/>
            <person name="Bowman C."/>
            <person name="Dodson R.J."/>
            <person name="Gwinn M.L."/>
            <person name="Nelson W.C."/>
            <person name="DeBoy R.T."/>
            <person name="Kolonay J.F."/>
            <person name="McClarty G."/>
            <person name="Salzberg S.L."/>
            <person name="Eisen J.A."/>
            <person name="Fraser C.M."/>
        </authorList>
    </citation>
    <scope>NUCLEOTIDE SEQUENCE [LARGE SCALE GENOMIC DNA]</scope>
    <source>
        <strain>MoPn / Nigg</strain>
    </source>
</reference>
<proteinExistence type="inferred from homology"/>